<accession>Q80VQ1</accession>
<accession>Q3UI50</accession>
<accession>Q8BKR1</accession>
<accession>Q8BUS9</accession>
<reference key="1">
    <citation type="journal article" date="2005" name="Science">
        <title>The transcriptional landscape of the mammalian genome.</title>
        <authorList>
            <person name="Carninci P."/>
            <person name="Kasukawa T."/>
            <person name="Katayama S."/>
            <person name="Gough J."/>
            <person name="Frith M.C."/>
            <person name="Maeda N."/>
            <person name="Oyama R."/>
            <person name="Ravasi T."/>
            <person name="Lenhard B."/>
            <person name="Wells C."/>
            <person name="Kodzius R."/>
            <person name="Shimokawa K."/>
            <person name="Bajic V.B."/>
            <person name="Brenner S.E."/>
            <person name="Batalov S."/>
            <person name="Forrest A.R."/>
            <person name="Zavolan M."/>
            <person name="Davis M.J."/>
            <person name="Wilming L.G."/>
            <person name="Aidinis V."/>
            <person name="Allen J.E."/>
            <person name="Ambesi-Impiombato A."/>
            <person name="Apweiler R."/>
            <person name="Aturaliya R.N."/>
            <person name="Bailey T.L."/>
            <person name="Bansal M."/>
            <person name="Baxter L."/>
            <person name="Beisel K.W."/>
            <person name="Bersano T."/>
            <person name="Bono H."/>
            <person name="Chalk A.M."/>
            <person name="Chiu K.P."/>
            <person name="Choudhary V."/>
            <person name="Christoffels A."/>
            <person name="Clutterbuck D.R."/>
            <person name="Crowe M.L."/>
            <person name="Dalla E."/>
            <person name="Dalrymple B.P."/>
            <person name="de Bono B."/>
            <person name="Della Gatta G."/>
            <person name="di Bernardo D."/>
            <person name="Down T."/>
            <person name="Engstrom P."/>
            <person name="Fagiolini M."/>
            <person name="Faulkner G."/>
            <person name="Fletcher C.F."/>
            <person name="Fukushima T."/>
            <person name="Furuno M."/>
            <person name="Futaki S."/>
            <person name="Gariboldi M."/>
            <person name="Georgii-Hemming P."/>
            <person name="Gingeras T.R."/>
            <person name="Gojobori T."/>
            <person name="Green R.E."/>
            <person name="Gustincich S."/>
            <person name="Harbers M."/>
            <person name="Hayashi Y."/>
            <person name="Hensch T.K."/>
            <person name="Hirokawa N."/>
            <person name="Hill D."/>
            <person name="Huminiecki L."/>
            <person name="Iacono M."/>
            <person name="Ikeo K."/>
            <person name="Iwama A."/>
            <person name="Ishikawa T."/>
            <person name="Jakt M."/>
            <person name="Kanapin A."/>
            <person name="Katoh M."/>
            <person name="Kawasawa Y."/>
            <person name="Kelso J."/>
            <person name="Kitamura H."/>
            <person name="Kitano H."/>
            <person name="Kollias G."/>
            <person name="Krishnan S.P."/>
            <person name="Kruger A."/>
            <person name="Kummerfeld S.K."/>
            <person name="Kurochkin I.V."/>
            <person name="Lareau L.F."/>
            <person name="Lazarevic D."/>
            <person name="Lipovich L."/>
            <person name="Liu J."/>
            <person name="Liuni S."/>
            <person name="McWilliam S."/>
            <person name="Madan Babu M."/>
            <person name="Madera M."/>
            <person name="Marchionni L."/>
            <person name="Matsuda H."/>
            <person name="Matsuzawa S."/>
            <person name="Miki H."/>
            <person name="Mignone F."/>
            <person name="Miyake S."/>
            <person name="Morris K."/>
            <person name="Mottagui-Tabar S."/>
            <person name="Mulder N."/>
            <person name="Nakano N."/>
            <person name="Nakauchi H."/>
            <person name="Ng P."/>
            <person name="Nilsson R."/>
            <person name="Nishiguchi S."/>
            <person name="Nishikawa S."/>
            <person name="Nori F."/>
            <person name="Ohara O."/>
            <person name="Okazaki Y."/>
            <person name="Orlando V."/>
            <person name="Pang K.C."/>
            <person name="Pavan W.J."/>
            <person name="Pavesi G."/>
            <person name="Pesole G."/>
            <person name="Petrovsky N."/>
            <person name="Piazza S."/>
            <person name="Reed J."/>
            <person name="Reid J.F."/>
            <person name="Ring B.Z."/>
            <person name="Ringwald M."/>
            <person name="Rost B."/>
            <person name="Ruan Y."/>
            <person name="Salzberg S.L."/>
            <person name="Sandelin A."/>
            <person name="Schneider C."/>
            <person name="Schoenbach C."/>
            <person name="Sekiguchi K."/>
            <person name="Semple C.A."/>
            <person name="Seno S."/>
            <person name="Sessa L."/>
            <person name="Sheng Y."/>
            <person name="Shibata Y."/>
            <person name="Shimada H."/>
            <person name="Shimada K."/>
            <person name="Silva D."/>
            <person name="Sinclair B."/>
            <person name="Sperling S."/>
            <person name="Stupka E."/>
            <person name="Sugiura K."/>
            <person name="Sultana R."/>
            <person name="Takenaka Y."/>
            <person name="Taki K."/>
            <person name="Tammoja K."/>
            <person name="Tan S.L."/>
            <person name="Tang S."/>
            <person name="Taylor M.S."/>
            <person name="Tegner J."/>
            <person name="Teichmann S.A."/>
            <person name="Ueda H.R."/>
            <person name="van Nimwegen E."/>
            <person name="Verardo R."/>
            <person name="Wei C.L."/>
            <person name="Yagi K."/>
            <person name="Yamanishi H."/>
            <person name="Zabarovsky E."/>
            <person name="Zhu S."/>
            <person name="Zimmer A."/>
            <person name="Hide W."/>
            <person name="Bult C."/>
            <person name="Grimmond S.M."/>
            <person name="Teasdale R.D."/>
            <person name="Liu E.T."/>
            <person name="Brusic V."/>
            <person name="Quackenbush J."/>
            <person name="Wahlestedt C."/>
            <person name="Mattick J.S."/>
            <person name="Hume D.A."/>
            <person name="Kai C."/>
            <person name="Sasaki D."/>
            <person name="Tomaru Y."/>
            <person name="Fukuda S."/>
            <person name="Kanamori-Katayama M."/>
            <person name="Suzuki M."/>
            <person name="Aoki J."/>
            <person name="Arakawa T."/>
            <person name="Iida J."/>
            <person name="Imamura K."/>
            <person name="Itoh M."/>
            <person name="Kato T."/>
            <person name="Kawaji H."/>
            <person name="Kawagashira N."/>
            <person name="Kawashima T."/>
            <person name="Kojima M."/>
            <person name="Kondo S."/>
            <person name="Konno H."/>
            <person name="Nakano K."/>
            <person name="Ninomiya N."/>
            <person name="Nishio T."/>
            <person name="Okada M."/>
            <person name="Plessy C."/>
            <person name="Shibata K."/>
            <person name="Shiraki T."/>
            <person name="Suzuki S."/>
            <person name="Tagami M."/>
            <person name="Waki K."/>
            <person name="Watahiki A."/>
            <person name="Okamura-Oho Y."/>
            <person name="Suzuki H."/>
            <person name="Kawai J."/>
            <person name="Hayashizaki Y."/>
        </authorList>
    </citation>
    <scope>NUCLEOTIDE SEQUENCE [LARGE SCALE MRNA] (ISOFORMS 1; 2 AND 3)</scope>
    <source>
        <strain>C57BL/6J</strain>
        <tissue>Cerebellum</tissue>
        <tissue>Kidney</tissue>
    </source>
</reference>
<reference key="2">
    <citation type="journal article" date="2004" name="Genome Res.">
        <title>The status, quality, and expansion of the NIH full-length cDNA project: the Mammalian Gene Collection (MGC).</title>
        <authorList>
            <consortium name="The MGC Project Team"/>
        </authorList>
    </citation>
    <scope>NUCLEOTIDE SEQUENCE [LARGE SCALE MRNA] (ISOFORM 1)</scope>
    <source>
        <strain>NMRI</strain>
        <tissue>Mammary gland</tissue>
        <tissue>Olfactory epithelium</tissue>
    </source>
</reference>
<reference key="3">
    <citation type="journal article" date="2010" name="Cell">
        <title>A tissue-specific atlas of mouse protein phosphorylation and expression.</title>
        <authorList>
            <person name="Huttlin E.L."/>
            <person name="Jedrychowski M.P."/>
            <person name="Elias J.E."/>
            <person name="Goswami T."/>
            <person name="Rad R."/>
            <person name="Beausoleil S.A."/>
            <person name="Villen J."/>
            <person name="Haas W."/>
            <person name="Sowa M.E."/>
            <person name="Gygi S.P."/>
        </authorList>
    </citation>
    <scope>IDENTIFICATION BY MASS SPECTROMETRY [LARGE SCALE ANALYSIS]</scope>
    <source>
        <tissue>Heart</tissue>
        <tissue>Kidney</tissue>
        <tissue>Lung</tissue>
    </source>
</reference>
<gene>
    <name type="primary">Lrrc1</name>
</gene>
<sequence length="524" mass="59412">MFHCIPLWRCNRHVEAIDKRHCSLVYVPEEIYRYARSLEELLLDANQLRELPEQFFQLVKLRKLGLSDNEIQRLPPEIANFMQLVELDVSRNDIPEIPESIAFCKALQVADFSGNPLTRLPESFPELQNLTCLSVNDISLQSLPENIGNLYNLASLELRENLLTYLPDSLTQLRRLEELDLGNNEIYNLPESIGALLHLKDLWLDGNQLSELPQEIGNLKNLLCLDVSENRLERLPEEISGLTSLTYLVISQNLLETIPEGIGKLKKLSILKLDQNRLTQLPEAIGDCENLTELVLTENRLLTLPKSIGKLKKLSNLNADRNKLVSLPKEIGGCCSLTMFCIRDNRLTRLPAEVSQAVELHVLDVAGNRLHHLPLSLTTLKLKALWLSDNQSQPLLTFQTDIDRATGEKILTCVLLPQMPSEPICQESLPRCGALESLVTDMSEEAWNDRSVHRVSAIRFLEDEKDEDENETRTLQRRATPHPGELKNMKKTVENLRNDMNAAKGLDSNKNEVNHAAERVTTSV</sequence>
<proteinExistence type="evidence at protein level"/>
<name>LRRC1_MOUSE</name>
<protein>
    <recommendedName>
        <fullName>Leucine-rich repeat-containing protein 1</fullName>
    </recommendedName>
</protein>
<feature type="chain" id="PRO_0000084490" description="Leucine-rich repeat-containing protein 1">
    <location>
        <begin position="1"/>
        <end position="524"/>
    </location>
</feature>
<feature type="repeat" description="LRR 1">
    <location>
        <begin position="11"/>
        <end position="34"/>
    </location>
</feature>
<feature type="repeat" description="LRR 2">
    <location>
        <begin position="35"/>
        <end position="58"/>
    </location>
</feature>
<feature type="repeat" description="LRR 3">
    <location>
        <begin position="60"/>
        <end position="81"/>
    </location>
</feature>
<feature type="repeat" description="LRR 4">
    <location>
        <begin position="83"/>
        <end position="105"/>
    </location>
</feature>
<feature type="repeat" description="LRR 5">
    <location>
        <begin position="107"/>
        <end position="126"/>
    </location>
</feature>
<feature type="repeat" description="LRR 6">
    <location>
        <begin position="127"/>
        <end position="149"/>
    </location>
</feature>
<feature type="repeat" description="LRR 7">
    <location>
        <begin position="150"/>
        <end position="172"/>
    </location>
</feature>
<feature type="repeat" description="LRR 8">
    <location>
        <begin position="173"/>
        <end position="196"/>
    </location>
</feature>
<feature type="repeat" description="LRR 9">
    <location>
        <begin position="198"/>
        <end position="218"/>
    </location>
</feature>
<feature type="repeat" description="LRR 10">
    <location>
        <begin position="219"/>
        <end position="242"/>
    </location>
</feature>
<feature type="repeat" description="LRR 11">
    <location>
        <begin position="244"/>
        <end position="264"/>
    </location>
</feature>
<feature type="repeat" description="LRR 12">
    <location>
        <begin position="265"/>
        <end position="288"/>
    </location>
</feature>
<feature type="repeat" description="LRR 13">
    <location>
        <begin position="290"/>
        <end position="310"/>
    </location>
</feature>
<feature type="repeat" description="LRR 14">
    <location>
        <begin position="311"/>
        <end position="334"/>
    </location>
</feature>
<feature type="repeat" description="LRR 15">
    <location>
        <begin position="336"/>
        <end position="356"/>
    </location>
</feature>
<feature type="repeat" description="LRR 16">
    <location>
        <begin position="357"/>
        <end position="380"/>
    </location>
</feature>
<feature type="repeat" description="LRR 17">
    <location>
        <begin position="382"/>
        <end position="405"/>
    </location>
</feature>
<feature type="region of interest" description="Disordered" evidence="4">
    <location>
        <begin position="464"/>
        <end position="485"/>
    </location>
</feature>
<feature type="coiled-coil region" evidence="3">
    <location>
        <begin position="456"/>
        <end position="512"/>
    </location>
</feature>
<feature type="modified residue" description="Phosphothreonine" evidence="2">
    <location>
        <position position="480"/>
    </location>
</feature>
<feature type="splice variant" id="VSP_010914" description="In isoform 2." evidence="5">
    <location>
        <begin position="1"/>
        <end position="81"/>
    </location>
</feature>
<feature type="splice variant" id="VSP_010915" description="In isoform 3." evidence="5">
    <original>IGGCCSLTMFCIRDNRLTR</original>
    <variation>EHISGKVCRLFYHKAATAI</variation>
    <location>
        <begin position="331"/>
        <end position="349"/>
    </location>
</feature>
<feature type="splice variant" id="VSP_010916" description="In isoform 3." evidence="5">
    <location>
        <begin position="350"/>
        <end position="524"/>
    </location>
</feature>
<feature type="sequence conflict" description="In Ref. 1; BAC38586." evidence="6" ref="1">
    <original>N</original>
    <variation>D</variation>
    <location>
        <position position="115"/>
    </location>
</feature>
<feature type="sequence conflict" description="In Ref. 1; BAC34508." evidence="6" ref="1">
    <original>R</original>
    <variation>K</variation>
    <location>
        <position position="369"/>
    </location>
</feature>
<keyword id="KW-0025">Alternative splicing</keyword>
<keyword id="KW-0175">Coiled coil</keyword>
<keyword id="KW-0963">Cytoplasm</keyword>
<keyword id="KW-0433">Leucine-rich repeat</keyword>
<keyword id="KW-0472">Membrane</keyword>
<keyword id="KW-0597">Phosphoprotein</keyword>
<keyword id="KW-1185">Reference proteome</keyword>
<keyword id="KW-0677">Repeat</keyword>
<comment type="subunit">
    <text evidence="1">Interacts with DLG1. May form a complex with DLG1 and ERBIN, where interaction between LRRC1 and ERBIN is indirect (By similarity).</text>
</comment>
<comment type="subcellular location">
    <subcellularLocation>
        <location evidence="1">Cytoplasm</location>
    </subcellularLocation>
    <subcellularLocation>
        <location evidence="1">Membrane</location>
        <topology evidence="1">Peripheral membrane protein</topology>
    </subcellularLocation>
    <text evidence="1">Localized at the basolateral side of epithelial cells.</text>
</comment>
<comment type="alternative products">
    <event type="alternative splicing"/>
    <isoform>
        <id>Q80VQ1-1</id>
        <name>1</name>
        <sequence type="displayed"/>
    </isoform>
    <isoform>
        <id>Q80VQ1-2</id>
        <name>2</name>
        <sequence type="described" ref="VSP_010914"/>
    </isoform>
    <isoform>
        <id>Q80VQ1-3</id>
        <name>3</name>
        <sequence type="described" ref="VSP_010915 VSP_010916"/>
    </isoform>
</comment>
<comment type="sequence caution" evidence="6">
    <conflict type="erroneous initiation">
        <sequence resource="EMBL-CDS" id="AAH46591"/>
    </conflict>
</comment>
<evidence type="ECO:0000250" key="1"/>
<evidence type="ECO:0000250" key="2">
    <source>
        <dbReference type="UniProtKB" id="Q9BTT6"/>
    </source>
</evidence>
<evidence type="ECO:0000255" key="3"/>
<evidence type="ECO:0000256" key="4">
    <source>
        <dbReference type="SAM" id="MobiDB-lite"/>
    </source>
</evidence>
<evidence type="ECO:0000303" key="5">
    <source>
    </source>
</evidence>
<evidence type="ECO:0000305" key="6"/>
<organism>
    <name type="scientific">Mus musculus</name>
    <name type="common">Mouse</name>
    <dbReference type="NCBI Taxonomy" id="10090"/>
    <lineage>
        <taxon>Eukaryota</taxon>
        <taxon>Metazoa</taxon>
        <taxon>Chordata</taxon>
        <taxon>Craniata</taxon>
        <taxon>Vertebrata</taxon>
        <taxon>Euteleostomi</taxon>
        <taxon>Mammalia</taxon>
        <taxon>Eutheria</taxon>
        <taxon>Euarchontoglires</taxon>
        <taxon>Glires</taxon>
        <taxon>Rodentia</taxon>
        <taxon>Myomorpha</taxon>
        <taxon>Muroidea</taxon>
        <taxon>Muridae</taxon>
        <taxon>Murinae</taxon>
        <taxon>Mus</taxon>
        <taxon>Mus</taxon>
    </lineage>
</organism>
<dbReference type="EMBL" id="AK051043">
    <property type="protein sequence ID" value="BAC34508.1"/>
    <property type="molecule type" value="mRNA"/>
</dbReference>
<dbReference type="EMBL" id="AK082721">
    <property type="protein sequence ID" value="BAC38586.1"/>
    <property type="molecule type" value="mRNA"/>
</dbReference>
<dbReference type="EMBL" id="AK147075">
    <property type="protein sequence ID" value="BAE27656.1"/>
    <property type="molecule type" value="mRNA"/>
</dbReference>
<dbReference type="EMBL" id="BC046591">
    <property type="protein sequence ID" value="AAH46591.1"/>
    <property type="status" value="ALT_INIT"/>
    <property type="molecule type" value="mRNA"/>
</dbReference>
<dbReference type="EMBL" id="BC087542">
    <property type="protein sequence ID" value="AAH87542.1"/>
    <property type="molecule type" value="mRNA"/>
</dbReference>
<dbReference type="CCDS" id="CCDS72282.1">
    <molecule id="Q80VQ1-1"/>
</dbReference>
<dbReference type="RefSeq" id="NP_001139520.1">
    <molecule id="Q80VQ1-1"/>
    <property type="nucleotide sequence ID" value="NM_001146048.1"/>
</dbReference>
<dbReference type="RefSeq" id="NP_766116.3">
    <property type="nucleotide sequence ID" value="NM_172528.3"/>
</dbReference>
<dbReference type="RefSeq" id="XP_036010713.1">
    <molecule id="Q80VQ1-2"/>
    <property type="nucleotide sequence ID" value="XM_036154820.1"/>
</dbReference>
<dbReference type="SMR" id="Q80VQ1"/>
<dbReference type="BioGRID" id="229517">
    <property type="interactions" value="2"/>
</dbReference>
<dbReference type="FunCoup" id="Q80VQ1">
    <property type="interactions" value="483"/>
</dbReference>
<dbReference type="IntAct" id="Q80VQ1">
    <property type="interactions" value="1"/>
</dbReference>
<dbReference type="STRING" id="10090.ENSMUSP00000139226"/>
<dbReference type="iPTMnet" id="Q80VQ1"/>
<dbReference type="PhosphoSitePlus" id="Q80VQ1"/>
<dbReference type="SwissPalm" id="Q80VQ1"/>
<dbReference type="jPOST" id="Q80VQ1"/>
<dbReference type="PaxDb" id="10090-ENSMUSP00000109048"/>
<dbReference type="PeptideAtlas" id="Q80VQ1"/>
<dbReference type="ProteomicsDB" id="292365">
    <molecule id="Q80VQ1-1"/>
</dbReference>
<dbReference type="ProteomicsDB" id="292366">
    <molecule id="Q80VQ1-2"/>
</dbReference>
<dbReference type="ProteomicsDB" id="292367">
    <molecule id="Q80VQ1-3"/>
</dbReference>
<dbReference type="Pumba" id="Q80VQ1"/>
<dbReference type="Antibodypedia" id="17278">
    <property type="antibodies" value="87 antibodies from 26 providers"/>
</dbReference>
<dbReference type="DNASU" id="214345"/>
<dbReference type="Ensembl" id="ENSMUST00000183734.2">
    <molecule id="Q80VQ1-3"/>
    <property type="protein sequence ID" value="ENSMUSP00000138912.2"/>
    <property type="gene ID" value="ENSMUSG00000032352.17"/>
</dbReference>
<dbReference type="Ensembl" id="ENSMUST00000183873.8">
    <molecule id="Q80VQ1-1"/>
    <property type="protein sequence ID" value="ENSMUSP00000139226.2"/>
    <property type="gene ID" value="ENSMUSG00000032352.17"/>
</dbReference>
<dbReference type="GeneID" id="214345"/>
<dbReference type="KEGG" id="mmu:214345"/>
<dbReference type="UCSC" id="uc009qtk.2">
    <molecule id="Q80VQ1-1"/>
    <property type="organism name" value="mouse"/>
</dbReference>
<dbReference type="AGR" id="MGI:2442313"/>
<dbReference type="CTD" id="55227"/>
<dbReference type="MGI" id="MGI:2442313">
    <property type="gene designation" value="Lrrc1"/>
</dbReference>
<dbReference type="VEuPathDB" id="HostDB:ENSMUSG00000032352"/>
<dbReference type="eggNOG" id="KOG0619">
    <property type="taxonomic scope" value="Eukaryota"/>
</dbReference>
<dbReference type="GeneTree" id="ENSGT00940000154025"/>
<dbReference type="HOGENOM" id="CLU_000288_18_23_1"/>
<dbReference type="InParanoid" id="Q80VQ1"/>
<dbReference type="OMA" id="VIDKRHC"/>
<dbReference type="OrthoDB" id="676979at2759"/>
<dbReference type="PhylomeDB" id="Q80VQ1"/>
<dbReference type="Reactome" id="R-MMU-9696270">
    <property type="pathway name" value="RND2 GTPase cycle"/>
</dbReference>
<dbReference type="BioGRID-ORCS" id="214345">
    <property type="hits" value="2 hits in 76 CRISPR screens"/>
</dbReference>
<dbReference type="ChiTaRS" id="Lrrc1">
    <property type="organism name" value="mouse"/>
</dbReference>
<dbReference type="PRO" id="PR:Q80VQ1"/>
<dbReference type="Proteomes" id="UP000000589">
    <property type="component" value="Chromosome 9"/>
</dbReference>
<dbReference type="RNAct" id="Q80VQ1">
    <property type="molecule type" value="protein"/>
</dbReference>
<dbReference type="Bgee" id="ENSMUSG00000032352">
    <property type="expression patterns" value="Expressed in spermatid and 228 other cell types or tissues"/>
</dbReference>
<dbReference type="ExpressionAtlas" id="Q80VQ1">
    <property type="expression patterns" value="baseline and differential"/>
</dbReference>
<dbReference type="GO" id="GO:0005829">
    <property type="term" value="C:cytosol"/>
    <property type="evidence" value="ECO:0007669"/>
    <property type="project" value="Ensembl"/>
</dbReference>
<dbReference type="GO" id="GO:0016020">
    <property type="term" value="C:membrane"/>
    <property type="evidence" value="ECO:0007669"/>
    <property type="project" value="UniProtKB-SubCell"/>
</dbReference>
<dbReference type="FunFam" id="3.80.10.10:FF:000346">
    <property type="entry name" value="Leucine rich repeat containing 1"/>
    <property type="match status" value="1"/>
</dbReference>
<dbReference type="FunFam" id="3.80.10.10:FF:000480">
    <property type="entry name" value="Leucine rich repeat containing 1"/>
    <property type="match status" value="1"/>
</dbReference>
<dbReference type="FunFam" id="3.80.10.10:FF:000490">
    <property type="entry name" value="Leucine rich repeat containing 1"/>
    <property type="match status" value="1"/>
</dbReference>
<dbReference type="Gene3D" id="3.80.10.10">
    <property type="entry name" value="Ribonuclease Inhibitor"/>
    <property type="match status" value="3"/>
</dbReference>
<dbReference type="InterPro" id="IPR001611">
    <property type="entry name" value="Leu-rich_rpt"/>
</dbReference>
<dbReference type="InterPro" id="IPR003591">
    <property type="entry name" value="Leu-rich_rpt_typical-subtyp"/>
</dbReference>
<dbReference type="InterPro" id="IPR032675">
    <property type="entry name" value="LRR_dom_sf"/>
</dbReference>
<dbReference type="InterPro" id="IPR055414">
    <property type="entry name" value="LRR_R13L4/SHOC2-like"/>
</dbReference>
<dbReference type="InterPro" id="IPR050614">
    <property type="entry name" value="Synaptic_Scaffolding_LAP-MAGUK"/>
</dbReference>
<dbReference type="PANTHER" id="PTHR23119">
    <property type="entry name" value="DISCS LARGE"/>
    <property type="match status" value="1"/>
</dbReference>
<dbReference type="PANTHER" id="PTHR23119:SF58">
    <property type="entry name" value="LEUCINE RICH REPEAT CONTAINING 1"/>
    <property type="match status" value="1"/>
</dbReference>
<dbReference type="Pfam" id="PF23598">
    <property type="entry name" value="LRR_14"/>
    <property type="match status" value="1"/>
</dbReference>
<dbReference type="Pfam" id="PF13855">
    <property type="entry name" value="LRR_8"/>
    <property type="match status" value="1"/>
</dbReference>
<dbReference type="SMART" id="SM00364">
    <property type="entry name" value="LRR_BAC"/>
    <property type="match status" value="15"/>
</dbReference>
<dbReference type="SMART" id="SM00369">
    <property type="entry name" value="LRR_TYP"/>
    <property type="match status" value="12"/>
</dbReference>
<dbReference type="SUPFAM" id="SSF52058">
    <property type="entry name" value="L domain-like"/>
    <property type="match status" value="2"/>
</dbReference>
<dbReference type="PROSITE" id="PS51450">
    <property type="entry name" value="LRR"/>
    <property type="match status" value="15"/>
</dbReference>